<name>PMT3_ARATH</name>
<dbReference type="EC" id="2.1.1.-"/>
<dbReference type="EMBL" id="Z97336">
    <property type="protein sequence ID" value="CAB10215.1"/>
    <property type="status" value="ALT_SEQ"/>
    <property type="molecule type" value="Genomic_DNA"/>
</dbReference>
<dbReference type="EMBL" id="AL161538">
    <property type="protein sequence ID" value="CAB78478.1"/>
    <property type="status" value="ALT_SEQ"/>
    <property type="molecule type" value="Genomic_DNA"/>
</dbReference>
<dbReference type="EMBL" id="CP002687">
    <property type="protein sequence ID" value="AEE83426.1"/>
    <property type="molecule type" value="Genomic_DNA"/>
</dbReference>
<dbReference type="EMBL" id="CP002687">
    <property type="protein sequence ID" value="AEE83427.1"/>
    <property type="molecule type" value="Genomic_DNA"/>
</dbReference>
<dbReference type="EMBL" id="AY059747">
    <property type="protein sequence ID" value="AAL24095.1"/>
    <property type="molecule type" value="mRNA"/>
</dbReference>
<dbReference type="EMBL" id="AY091393">
    <property type="protein sequence ID" value="AAM14332.1"/>
    <property type="molecule type" value="mRNA"/>
</dbReference>
<dbReference type="PIR" id="E71405">
    <property type="entry name" value="E71405"/>
</dbReference>
<dbReference type="RefSeq" id="NP_001031639.1">
    <property type="nucleotide sequence ID" value="NM_001036562.2"/>
</dbReference>
<dbReference type="RefSeq" id="NP_567427.1">
    <property type="nucleotide sequence ID" value="NM_117513.4"/>
</dbReference>
<dbReference type="FunCoup" id="Q93YV7">
    <property type="interactions" value="1054"/>
</dbReference>
<dbReference type="STRING" id="3702.Q93YV7"/>
<dbReference type="GlyGen" id="Q93YV7">
    <property type="glycosylation" value="1 site"/>
</dbReference>
<dbReference type="PaxDb" id="3702-AT4G14360.2"/>
<dbReference type="ProteomicsDB" id="234982"/>
<dbReference type="EnsemblPlants" id="AT4G14360.1">
    <property type="protein sequence ID" value="AT4G14360.1"/>
    <property type="gene ID" value="AT4G14360"/>
</dbReference>
<dbReference type="EnsemblPlants" id="AT4G14360.2">
    <property type="protein sequence ID" value="AT4G14360.2"/>
    <property type="gene ID" value="AT4G14360"/>
</dbReference>
<dbReference type="GeneID" id="827079"/>
<dbReference type="Gramene" id="AT4G14360.1">
    <property type="protein sequence ID" value="AT4G14360.1"/>
    <property type="gene ID" value="AT4G14360"/>
</dbReference>
<dbReference type="Gramene" id="AT4G14360.2">
    <property type="protein sequence ID" value="AT4G14360.2"/>
    <property type="gene ID" value="AT4G14360"/>
</dbReference>
<dbReference type="KEGG" id="ath:AT4G14360"/>
<dbReference type="Araport" id="AT4G14360"/>
<dbReference type="TAIR" id="AT4G14360"/>
<dbReference type="eggNOG" id="ENOG502QTWS">
    <property type="taxonomic scope" value="Eukaryota"/>
</dbReference>
<dbReference type="HOGENOM" id="CLU_010485_2_2_1"/>
<dbReference type="InParanoid" id="Q93YV7"/>
<dbReference type="OMA" id="EACISTY"/>
<dbReference type="PhylomeDB" id="Q93YV7"/>
<dbReference type="PRO" id="PR:Q93YV7"/>
<dbReference type="Proteomes" id="UP000006548">
    <property type="component" value="Chromosome 4"/>
</dbReference>
<dbReference type="ExpressionAtlas" id="Q93YV7">
    <property type="expression patterns" value="baseline and differential"/>
</dbReference>
<dbReference type="GO" id="GO:0005768">
    <property type="term" value="C:endosome"/>
    <property type="evidence" value="ECO:0007005"/>
    <property type="project" value="TAIR"/>
</dbReference>
<dbReference type="GO" id="GO:0005794">
    <property type="term" value="C:Golgi apparatus"/>
    <property type="evidence" value="ECO:0007005"/>
    <property type="project" value="TAIR"/>
</dbReference>
<dbReference type="GO" id="GO:0000139">
    <property type="term" value="C:Golgi membrane"/>
    <property type="evidence" value="ECO:0007669"/>
    <property type="project" value="UniProtKB-SubCell"/>
</dbReference>
<dbReference type="GO" id="GO:0000138">
    <property type="term" value="C:Golgi trans cisterna"/>
    <property type="evidence" value="ECO:0007005"/>
    <property type="project" value="TAIR"/>
</dbReference>
<dbReference type="GO" id="GO:0009506">
    <property type="term" value="C:plasmodesma"/>
    <property type="evidence" value="ECO:0007005"/>
    <property type="project" value="TAIR"/>
</dbReference>
<dbReference type="GO" id="GO:0005802">
    <property type="term" value="C:trans-Golgi network"/>
    <property type="evidence" value="ECO:0007005"/>
    <property type="project" value="TAIR"/>
</dbReference>
<dbReference type="GO" id="GO:0008168">
    <property type="term" value="F:methyltransferase activity"/>
    <property type="evidence" value="ECO:0007669"/>
    <property type="project" value="UniProtKB-KW"/>
</dbReference>
<dbReference type="GO" id="GO:0032259">
    <property type="term" value="P:methylation"/>
    <property type="evidence" value="ECO:0007669"/>
    <property type="project" value="UniProtKB-KW"/>
</dbReference>
<dbReference type="FunFam" id="3.40.50.150:FF:000043">
    <property type="entry name" value="probable methyltransferase PMT3"/>
    <property type="match status" value="1"/>
</dbReference>
<dbReference type="Gene3D" id="3.40.50.150">
    <property type="entry name" value="Vaccinia Virus protein VP39"/>
    <property type="match status" value="1"/>
</dbReference>
<dbReference type="InterPro" id="IPR004159">
    <property type="entry name" value="Put_SAM_MeTrfase"/>
</dbReference>
<dbReference type="InterPro" id="IPR029063">
    <property type="entry name" value="SAM-dependent_MTases_sf"/>
</dbReference>
<dbReference type="PANTHER" id="PTHR10108:SF1152">
    <property type="entry name" value="METHYLTRANSFERASE PMT1-RELATED"/>
    <property type="match status" value="1"/>
</dbReference>
<dbReference type="PANTHER" id="PTHR10108">
    <property type="entry name" value="SAM-DEPENDENT METHYLTRANSFERASE"/>
    <property type="match status" value="1"/>
</dbReference>
<dbReference type="Pfam" id="PF03141">
    <property type="entry name" value="Methyltransf_29"/>
    <property type="match status" value="1"/>
</dbReference>
<dbReference type="SUPFAM" id="SSF53335">
    <property type="entry name" value="S-adenosyl-L-methionine-dependent methyltransferases"/>
    <property type="match status" value="2"/>
</dbReference>
<sequence length="608" mass="69237">MKGRSDGGQKKRVIALVCVAAVVLVFVYLFYGSSDHRASAIEYGRKLGLGGDDDDTKQDDTSSSFGVDDGFTPRSFPVCDDRHSELIPCLDRNLIYQMRLKLDLSLMEHYERHCPPPERRFNCLIPPPNGYKVPIKWPKSRDEVWKVNIPHTHLAHEKSDQNWMVVKGDKINFPGGGTHFHYGADKYIASMANMLNYPNNVLNNGGRLRTVFDVGCGVASFGGYLLSSDILTMSLAPNDVHQNQIQFALERGIPASLGVLGTKRLPYPSRSFELSHCSRCRIDWLQRDGILLLELDRVLRPGGYFAYSSPEAYAQDEEDLRIWREMSALVERMCWKIAAKRNQTVIWQKPLTNDCYLEREPGTQPPLCRSDNDPDAVWGVNMEACITSYSDHDHKTKGSGLAPWPARLTSPPPRLADFGYSTGMFEKDTELWRQRVDTYWDLLSPRIESDTVRNIMDMKASMGSFAAALKEKDVWVMNVVPEDGPNTLKLIYDRGLMGAVHSWCEAFSTYPRTYDLLHAWDIISDIKKKGCSEVDLLLEMDRILRPSGFIIIRDKQRVVDFVKKYLKALHWEEVGTKTDSDSDQDSDNVVFIVQKKLWLTSESLRDME</sequence>
<accession>Q93YV7</accession>
<accession>O23292</accession>
<protein>
    <recommendedName>
        <fullName>Probable methyltransferase PMT3</fullName>
        <ecNumber>2.1.1.-</ecNumber>
    </recommendedName>
</protein>
<feature type="chain" id="PRO_0000393243" description="Probable methyltransferase PMT3">
    <location>
        <begin position="1"/>
        <end position="608"/>
    </location>
</feature>
<feature type="topological domain" description="Cytoplasmic" evidence="1">
    <location>
        <begin position="1"/>
        <end position="12"/>
    </location>
</feature>
<feature type="transmembrane region" description="Helical; Signal-anchor for type II membrane protein" evidence="1">
    <location>
        <begin position="13"/>
        <end position="33"/>
    </location>
</feature>
<feature type="topological domain" description="Lumenal" evidence="1">
    <location>
        <begin position="34"/>
        <end position="608"/>
    </location>
</feature>
<feature type="glycosylation site" description="N-linked (GlcNAc...) asparagine" evidence="1">
    <location>
        <position position="342"/>
    </location>
</feature>
<keyword id="KW-0325">Glycoprotein</keyword>
<keyword id="KW-0333">Golgi apparatus</keyword>
<keyword id="KW-0472">Membrane</keyword>
<keyword id="KW-0489">Methyltransferase</keyword>
<keyword id="KW-1185">Reference proteome</keyword>
<keyword id="KW-0735">Signal-anchor</keyword>
<keyword id="KW-0808">Transferase</keyword>
<keyword id="KW-0812">Transmembrane</keyword>
<keyword id="KW-1133">Transmembrane helix</keyword>
<proteinExistence type="evidence at transcript level"/>
<evidence type="ECO:0000255" key="1"/>
<evidence type="ECO:0000305" key="2"/>
<gene>
    <name type="ordered locus">At4g14360</name>
    <name type="ORF">dl3220c</name>
    <name type="ORF">FCAALL.222</name>
</gene>
<comment type="subcellular location">
    <subcellularLocation>
        <location evidence="2">Golgi apparatus membrane</location>
        <topology evidence="2">Single-pass type II membrane protein</topology>
    </subcellularLocation>
</comment>
<comment type="miscellaneous">
    <text>Co-expressed with the galacturonosyltransferase GAUT1.</text>
</comment>
<comment type="similarity">
    <text evidence="2">Belongs to the methyltransferase superfamily.</text>
</comment>
<comment type="sequence caution" evidence="2">
    <conflict type="erroneous gene model prediction">
        <sequence resource="EMBL-CDS" id="CAB10215"/>
    </conflict>
    <text>The predicted gene At4g14360 has been split into 2 genes: At4g14365 and At4g14360.</text>
</comment>
<comment type="sequence caution" evidence="2">
    <conflict type="erroneous gene model prediction">
        <sequence resource="EMBL-CDS" id="CAB78478"/>
    </conflict>
    <text>The predicted gene At4g14360 has been split into 2 genes: At4g14365 and At4g14360.</text>
</comment>
<reference key="1">
    <citation type="journal article" date="1998" name="Nature">
        <title>Analysis of 1.9 Mb of contiguous sequence from chromosome 4 of Arabidopsis thaliana.</title>
        <authorList>
            <person name="Bevan M."/>
            <person name="Bancroft I."/>
            <person name="Bent E."/>
            <person name="Love K."/>
            <person name="Goodman H.M."/>
            <person name="Dean C."/>
            <person name="Bergkamp R."/>
            <person name="Dirkse W."/>
            <person name="van Staveren M."/>
            <person name="Stiekema W."/>
            <person name="Drost L."/>
            <person name="Ridley P."/>
            <person name="Hudson S.-A."/>
            <person name="Patel K."/>
            <person name="Murphy G."/>
            <person name="Piffanelli P."/>
            <person name="Wedler H."/>
            <person name="Wedler E."/>
            <person name="Wambutt R."/>
            <person name="Weitzenegger T."/>
            <person name="Pohl T."/>
            <person name="Terryn N."/>
            <person name="Gielen J."/>
            <person name="Villarroel R."/>
            <person name="De Clercq R."/>
            <person name="van Montagu M."/>
            <person name="Lecharny A."/>
            <person name="Aubourg S."/>
            <person name="Gy I."/>
            <person name="Kreis M."/>
            <person name="Lao N."/>
            <person name="Kavanagh T."/>
            <person name="Hempel S."/>
            <person name="Kotter P."/>
            <person name="Entian K.-D."/>
            <person name="Rieger M."/>
            <person name="Schaefer M."/>
            <person name="Funk B."/>
            <person name="Mueller-Auer S."/>
            <person name="Silvey M."/>
            <person name="James R."/>
            <person name="Monfort A."/>
            <person name="Pons A."/>
            <person name="Puigdomenech P."/>
            <person name="Douka A."/>
            <person name="Voukelatou E."/>
            <person name="Milioni D."/>
            <person name="Hatzopoulos P."/>
            <person name="Piravandi E."/>
            <person name="Obermaier B."/>
            <person name="Hilbert H."/>
            <person name="Duesterhoeft A."/>
            <person name="Moores T."/>
            <person name="Jones J.D.G."/>
            <person name="Eneva T."/>
            <person name="Palme K."/>
            <person name="Benes V."/>
            <person name="Rechmann S."/>
            <person name="Ansorge W."/>
            <person name="Cooke R."/>
            <person name="Berger C."/>
            <person name="Delseny M."/>
            <person name="Voet M."/>
            <person name="Volckaert G."/>
            <person name="Mewes H.-W."/>
            <person name="Klosterman S."/>
            <person name="Schueller C."/>
            <person name="Chalwatzis N."/>
        </authorList>
    </citation>
    <scope>NUCLEOTIDE SEQUENCE [LARGE SCALE GENOMIC DNA]</scope>
    <source>
        <strain>cv. Columbia</strain>
    </source>
</reference>
<reference key="2">
    <citation type="journal article" date="1999" name="Nature">
        <title>Sequence and analysis of chromosome 4 of the plant Arabidopsis thaliana.</title>
        <authorList>
            <person name="Mayer K.F.X."/>
            <person name="Schueller C."/>
            <person name="Wambutt R."/>
            <person name="Murphy G."/>
            <person name="Volckaert G."/>
            <person name="Pohl T."/>
            <person name="Duesterhoeft A."/>
            <person name="Stiekema W."/>
            <person name="Entian K.-D."/>
            <person name="Terryn N."/>
            <person name="Harris B."/>
            <person name="Ansorge W."/>
            <person name="Brandt P."/>
            <person name="Grivell L.A."/>
            <person name="Rieger M."/>
            <person name="Weichselgartner M."/>
            <person name="de Simone V."/>
            <person name="Obermaier B."/>
            <person name="Mache R."/>
            <person name="Mueller M."/>
            <person name="Kreis M."/>
            <person name="Delseny M."/>
            <person name="Puigdomenech P."/>
            <person name="Watson M."/>
            <person name="Schmidtheini T."/>
            <person name="Reichert B."/>
            <person name="Portetelle D."/>
            <person name="Perez-Alonso M."/>
            <person name="Boutry M."/>
            <person name="Bancroft I."/>
            <person name="Vos P."/>
            <person name="Hoheisel J."/>
            <person name="Zimmermann W."/>
            <person name="Wedler H."/>
            <person name="Ridley P."/>
            <person name="Langham S.-A."/>
            <person name="McCullagh B."/>
            <person name="Bilham L."/>
            <person name="Robben J."/>
            <person name="van der Schueren J."/>
            <person name="Grymonprez B."/>
            <person name="Chuang Y.-J."/>
            <person name="Vandenbussche F."/>
            <person name="Braeken M."/>
            <person name="Weltjens I."/>
            <person name="Voet M."/>
            <person name="Bastiaens I."/>
            <person name="Aert R."/>
            <person name="Defoor E."/>
            <person name="Weitzenegger T."/>
            <person name="Bothe G."/>
            <person name="Ramsperger U."/>
            <person name="Hilbert H."/>
            <person name="Braun M."/>
            <person name="Holzer E."/>
            <person name="Brandt A."/>
            <person name="Peters S."/>
            <person name="van Staveren M."/>
            <person name="Dirkse W."/>
            <person name="Mooijman P."/>
            <person name="Klein Lankhorst R."/>
            <person name="Rose M."/>
            <person name="Hauf J."/>
            <person name="Koetter P."/>
            <person name="Berneiser S."/>
            <person name="Hempel S."/>
            <person name="Feldpausch M."/>
            <person name="Lamberth S."/>
            <person name="Van den Daele H."/>
            <person name="De Keyser A."/>
            <person name="Buysshaert C."/>
            <person name="Gielen J."/>
            <person name="Villarroel R."/>
            <person name="De Clercq R."/>
            <person name="van Montagu M."/>
            <person name="Rogers J."/>
            <person name="Cronin A."/>
            <person name="Quail M.A."/>
            <person name="Bray-Allen S."/>
            <person name="Clark L."/>
            <person name="Doggett J."/>
            <person name="Hall S."/>
            <person name="Kay M."/>
            <person name="Lennard N."/>
            <person name="McLay K."/>
            <person name="Mayes R."/>
            <person name="Pettett A."/>
            <person name="Rajandream M.A."/>
            <person name="Lyne M."/>
            <person name="Benes V."/>
            <person name="Rechmann S."/>
            <person name="Borkova D."/>
            <person name="Bloecker H."/>
            <person name="Scharfe M."/>
            <person name="Grimm M."/>
            <person name="Loehnert T.-H."/>
            <person name="Dose S."/>
            <person name="de Haan M."/>
            <person name="Maarse A.C."/>
            <person name="Schaefer M."/>
            <person name="Mueller-Auer S."/>
            <person name="Gabel C."/>
            <person name="Fuchs M."/>
            <person name="Fartmann B."/>
            <person name="Granderath K."/>
            <person name="Dauner D."/>
            <person name="Herzl A."/>
            <person name="Neumann S."/>
            <person name="Argiriou A."/>
            <person name="Vitale D."/>
            <person name="Liguori R."/>
            <person name="Piravandi E."/>
            <person name="Massenet O."/>
            <person name="Quigley F."/>
            <person name="Clabauld G."/>
            <person name="Muendlein A."/>
            <person name="Felber R."/>
            <person name="Schnabl S."/>
            <person name="Hiller R."/>
            <person name="Schmidt W."/>
            <person name="Lecharny A."/>
            <person name="Aubourg S."/>
            <person name="Chefdor F."/>
            <person name="Cooke R."/>
            <person name="Berger C."/>
            <person name="Monfort A."/>
            <person name="Casacuberta E."/>
            <person name="Gibbons T."/>
            <person name="Weber N."/>
            <person name="Vandenbol M."/>
            <person name="Bargues M."/>
            <person name="Terol J."/>
            <person name="Torres A."/>
            <person name="Perez-Perez A."/>
            <person name="Purnelle B."/>
            <person name="Bent E."/>
            <person name="Johnson S."/>
            <person name="Tacon D."/>
            <person name="Jesse T."/>
            <person name="Heijnen L."/>
            <person name="Schwarz S."/>
            <person name="Scholler P."/>
            <person name="Heber S."/>
            <person name="Francs P."/>
            <person name="Bielke C."/>
            <person name="Frishman D."/>
            <person name="Haase D."/>
            <person name="Lemcke K."/>
            <person name="Mewes H.-W."/>
            <person name="Stocker S."/>
            <person name="Zaccaria P."/>
            <person name="Bevan M."/>
            <person name="Wilson R.K."/>
            <person name="de la Bastide M."/>
            <person name="Habermann K."/>
            <person name="Parnell L."/>
            <person name="Dedhia N."/>
            <person name="Gnoj L."/>
            <person name="Schutz K."/>
            <person name="Huang E."/>
            <person name="Spiegel L."/>
            <person name="Sekhon M."/>
            <person name="Murray J."/>
            <person name="Sheet P."/>
            <person name="Cordes M."/>
            <person name="Abu-Threideh J."/>
            <person name="Stoneking T."/>
            <person name="Kalicki J."/>
            <person name="Graves T."/>
            <person name="Harmon G."/>
            <person name="Edwards J."/>
            <person name="Latreille P."/>
            <person name="Courtney L."/>
            <person name="Cloud J."/>
            <person name="Abbott A."/>
            <person name="Scott K."/>
            <person name="Johnson D."/>
            <person name="Minx P."/>
            <person name="Bentley D."/>
            <person name="Fulton B."/>
            <person name="Miller N."/>
            <person name="Greco T."/>
            <person name="Kemp K."/>
            <person name="Kramer J."/>
            <person name="Fulton L."/>
            <person name="Mardis E."/>
            <person name="Dante M."/>
            <person name="Pepin K."/>
            <person name="Hillier L.W."/>
            <person name="Nelson J."/>
            <person name="Spieth J."/>
            <person name="Ryan E."/>
            <person name="Andrews S."/>
            <person name="Geisel C."/>
            <person name="Layman D."/>
            <person name="Du H."/>
            <person name="Ali J."/>
            <person name="Berghoff A."/>
            <person name="Jones K."/>
            <person name="Drone K."/>
            <person name="Cotton M."/>
            <person name="Joshu C."/>
            <person name="Antonoiu B."/>
            <person name="Zidanic M."/>
            <person name="Strong C."/>
            <person name="Sun H."/>
            <person name="Lamar B."/>
            <person name="Yordan C."/>
            <person name="Ma P."/>
            <person name="Zhong J."/>
            <person name="Preston R."/>
            <person name="Vil D."/>
            <person name="Shekher M."/>
            <person name="Matero A."/>
            <person name="Shah R."/>
            <person name="Swaby I.K."/>
            <person name="O'Shaughnessy A."/>
            <person name="Rodriguez M."/>
            <person name="Hoffman J."/>
            <person name="Till S."/>
            <person name="Granat S."/>
            <person name="Shohdy N."/>
            <person name="Hasegawa A."/>
            <person name="Hameed A."/>
            <person name="Lodhi M."/>
            <person name="Johnson A."/>
            <person name="Chen E."/>
            <person name="Marra M.A."/>
            <person name="Martienssen R."/>
            <person name="McCombie W.R."/>
        </authorList>
    </citation>
    <scope>NUCLEOTIDE SEQUENCE [LARGE SCALE GENOMIC DNA]</scope>
    <source>
        <strain>cv. Columbia</strain>
    </source>
</reference>
<reference key="3">
    <citation type="journal article" date="2017" name="Plant J.">
        <title>Araport11: a complete reannotation of the Arabidopsis thaliana reference genome.</title>
        <authorList>
            <person name="Cheng C.Y."/>
            <person name="Krishnakumar V."/>
            <person name="Chan A.P."/>
            <person name="Thibaud-Nissen F."/>
            <person name="Schobel S."/>
            <person name="Town C.D."/>
        </authorList>
    </citation>
    <scope>GENOME REANNOTATION</scope>
    <source>
        <strain>cv. Columbia</strain>
    </source>
</reference>
<reference key="4">
    <citation type="journal article" date="2003" name="Science">
        <title>Empirical analysis of transcriptional activity in the Arabidopsis genome.</title>
        <authorList>
            <person name="Yamada K."/>
            <person name="Lim J."/>
            <person name="Dale J.M."/>
            <person name="Chen H."/>
            <person name="Shinn P."/>
            <person name="Palm C.J."/>
            <person name="Southwick A.M."/>
            <person name="Wu H.C."/>
            <person name="Kim C.J."/>
            <person name="Nguyen M."/>
            <person name="Pham P.K."/>
            <person name="Cheuk R.F."/>
            <person name="Karlin-Newmann G."/>
            <person name="Liu S.X."/>
            <person name="Lam B."/>
            <person name="Sakano H."/>
            <person name="Wu T."/>
            <person name="Yu G."/>
            <person name="Miranda M."/>
            <person name="Quach H.L."/>
            <person name="Tripp M."/>
            <person name="Chang C.H."/>
            <person name="Lee J.M."/>
            <person name="Toriumi M.J."/>
            <person name="Chan M.M."/>
            <person name="Tang C.C."/>
            <person name="Onodera C.S."/>
            <person name="Deng J.M."/>
            <person name="Akiyama K."/>
            <person name="Ansari Y."/>
            <person name="Arakawa T."/>
            <person name="Banh J."/>
            <person name="Banno F."/>
            <person name="Bowser L."/>
            <person name="Brooks S.Y."/>
            <person name="Carninci P."/>
            <person name="Chao Q."/>
            <person name="Choy N."/>
            <person name="Enju A."/>
            <person name="Goldsmith A.D."/>
            <person name="Gurjal M."/>
            <person name="Hansen N.F."/>
            <person name="Hayashizaki Y."/>
            <person name="Johnson-Hopson C."/>
            <person name="Hsuan V.W."/>
            <person name="Iida K."/>
            <person name="Karnes M."/>
            <person name="Khan S."/>
            <person name="Koesema E."/>
            <person name="Ishida J."/>
            <person name="Jiang P.X."/>
            <person name="Jones T."/>
            <person name="Kawai J."/>
            <person name="Kamiya A."/>
            <person name="Meyers C."/>
            <person name="Nakajima M."/>
            <person name="Narusaka M."/>
            <person name="Seki M."/>
            <person name="Sakurai T."/>
            <person name="Satou M."/>
            <person name="Tamse R."/>
            <person name="Vaysberg M."/>
            <person name="Wallender E.K."/>
            <person name="Wong C."/>
            <person name="Yamamura Y."/>
            <person name="Yuan S."/>
            <person name="Shinozaki K."/>
            <person name="Davis R.W."/>
            <person name="Theologis A."/>
            <person name="Ecker J.R."/>
        </authorList>
    </citation>
    <scope>NUCLEOTIDE SEQUENCE [LARGE SCALE MRNA]</scope>
    <source>
        <strain>cv. Columbia</strain>
    </source>
</reference>
<reference key="5">
    <citation type="journal article" date="2007" name="Plant J.">
        <title>Homogalacturonan synthesis in Arabidopsis thaliana requires a Golgi-localized protein with a putative methyltransferase domain.</title>
        <authorList>
            <person name="Mouille G."/>
            <person name="Ralet M.C."/>
            <person name="Cavelier C."/>
            <person name="Eland C."/>
            <person name="Effroy D."/>
            <person name="Hematy K."/>
            <person name="McCartney L."/>
            <person name="Truong H.N."/>
            <person name="Gaudon V."/>
            <person name="Thibault J.F."/>
            <person name="Marchant A."/>
            <person name="Hofte H."/>
        </authorList>
    </citation>
    <scope>GENE FAMILY</scope>
</reference>
<reference key="6">
    <citation type="journal article" date="2007" name="Plant J.">
        <title>The TUMOROUS SHOOT DEVELOPMENT2 gene of Arabidopsis encoding a putative methyltransferase is required for cell adhesion and co-ordinated plant development.</title>
        <authorList>
            <person name="Krupkova E."/>
            <person name="Immerzeel P."/>
            <person name="Pauly M."/>
            <person name="Schmulling T."/>
        </authorList>
    </citation>
    <scope>GENE FAMILY</scope>
</reference>
<organism>
    <name type="scientific">Arabidopsis thaliana</name>
    <name type="common">Mouse-ear cress</name>
    <dbReference type="NCBI Taxonomy" id="3702"/>
    <lineage>
        <taxon>Eukaryota</taxon>
        <taxon>Viridiplantae</taxon>
        <taxon>Streptophyta</taxon>
        <taxon>Embryophyta</taxon>
        <taxon>Tracheophyta</taxon>
        <taxon>Spermatophyta</taxon>
        <taxon>Magnoliopsida</taxon>
        <taxon>eudicotyledons</taxon>
        <taxon>Gunneridae</taxon>
        <taxon>Pentapetalae</taxon>
        <taxon>rosids</taxon>
        <taxon>malvids</taxon>
        <taxon>Brassicales</taxon>
        <taxon>Brassicaceae</taxon>
        <taxon>Camelineae</taxon>
        <taxon>Arabidopsis</taxon>
    </lineage>
</organism>